<accession>A8GCE8</accession>
<reference key="1">
    <citation type="submission" date="2007-09" db="EMBL/GenBank/DDBJ databases">
        <title>Complete sequence of chromosome of Serratia proteamaculans 568.</title>
        <authorList>
            <consortium name="US DOE Joint Genome Institute"/>
            <person name="Copeland A."/>
            <person name="Lucas S."/>
            <person name="Lapidus A."/>
            <person name="Barry K."/>
            <person name="Glavina del Rio T."/>
            <person name="Dalin E."/>
            <person name="Tice H."/>
            <person name="Pitluck S."/>
            <person name="Chain P."/>
            <person name="Malfatti S."/>
            <person name="Shin M."/>
            <person name="Vergez L."/>
            <person name="Schmutz J."/>
            <person name="Larimer F."/>
            <person name="Land M."/>
            <person name="Hauser L."/>
            <person name="Kyrpides N."/>
            <person name="Kim E."/>
            <person name="Taghavi S."/>
            <person name="Newman L."/>
            <person name="Vangronsveld J."/>
            <person name="van der Lelie D."/>
            <person name="Richardson P."/>
        </authorList>
    </citation>
    <scope>NUCLEOTIDE SEQUENCE [LARGE SCALE GENOMIC DNA]</scope>
    <source>
        <strain>568</strain>
    </source>
</reference>
<protein>
    <recommendedName>
        <fullName evidence="1">Outer-membrane lipoprotein carrier protein</fullName>
    </recommendedName>
</protein>
<name>LOLA_SERP5</name>
<sequence>MKKLLVACCLLSGFASTSVLADAAQDLQSRLAKVNSFHASFSQTVTSSDGAAVQQGEGELWVKRPNLFNWHMTSPDESVLVSDGQTLWFYNPFVEQVTATWLKNATGNTPFMLITRNNANDWKQYNVKQKGNDFELTPKSSSGNLKQFAISVDNSGTIRNFAAVEQDGQRSSYTLKSQQNVAADASKFKFTPPKGVTLDDQRQ</sequence>
<keyword id="KW-0143">Chaperone</keyword>
<keyword id="KW-0574">Periplasm</keyword>
<keyword id="KW-0653">Protein transport</keyword>
<keyword id="KW-0732">Signal</keyword>
<keyword id="KW-0813">Transport</keyword>
<feature type="signal peptide" evidence="1">
    <location>
        <begin position="1"/>
        <end position="21"/>
    </location>
</feature>
<feature type="chain" id="PRO_5000279238" description="Outer-membrane lipoprotein carrier protein">
    <location>
        <begin position="22"/>
        <end position="203"/>
    </location>
</feature>
<proteinExistence type="inferred from homology"/>
<gene>
    <name evidence="1" type="primary">lolA</name>
    <name type="ordered locus">Spro_1684</name>
</gene>
<dbReference type="EMBL" id="CP000826">
    <property type="protein sequence ID" value="ABV40788.1"/>
    <property type="molecule type" value="Genomic_DNA"/>
</dbReference>
<dbReference type="SMR" id="A8GCE8"/>
<dbReference type="STRING" id="399741.Spro_1684"/>
<dbReference type="KEGG" id="spe:Spro_1684"/>
<dbReference type="eggNOG" id="COG2834">
    <property type="taxonomic scope" value="Bacteria"/>
</dbReference>
<dbReference type="HOGENOM" id="CLU_087560_1_1_6"/>
<dbReference type="OrthoDB" id="9787361at2"/>
<dbReference type="GO" id="GO:0030288">
    <property type="term" value="C:outer membrane-bounded periplasmic space"/>
    <property type="evidence" value="ECO:0007669"/>
    <property type="project" value="TreeGrafter"/>
</dbReference>
<dbReference type="GO" id="GO:0044874">
    <property type="term" value="P:lipoprotein localization to outer membrane"/>
    <property type="evidence" value="ECO:0007669"/>
    <property type="project" value="UniProtKB-UniRule"/>
</dbReference>
<dbReference type="GO" id="GO:0042953">
    <property type="term" value="P:lipoprotein transport"/>
    <property type="evidence" value="ECO:0007669"/>
    <property type="project" value="InterPro"/>
</dbReference>
<dbReference type="CDD" id="cd16325">
    <property type="entry name" value="LolA"/>
    <property type="match status" value="1"/>
</dbReference>
<dbReference type="FunFam" id="2.50.20.10:FF:000001">
    <property type="entry name" value="Outer-membrane lipoprotein carrier protein"/>
    <property type="match status" value="1"/>
</dbReference>
<dbReference type="Gene3D" id="2.50.20.10">
    <property type="entry name" value="Lipoprotein localisation LolA/LolB/LppX"/>
    <property type="match status" value="1"/>
</dbReference>
<dbReference type="HAMAP" id="MF_00240">
    <property type="entry name" value="LolA"/>
    <property type="match status" value="1"/>
</dbReference>
<dbReference type="InterPro" id="IPR029046">
    <property type="entry name" value="LolA/LolB/LppX"/>
</dbReference>
<dbReference type="InterPro" id="IPR004564">
    <property type="entry name" value="OM_lipoprot_carrier_LolA-like"/>
</dbReference>
<dbReference type="InterPro" id="IPR018323">
    <property type="entry name" value="OM_lipoprot_carrier_LolA_Pbac"/>
</dbReference>
<dbReference type="NCBIfam" id="TIGR00547">
    <property type="entry name" value="lolA"/>
    <property type="match status" value="1"/>
</dbReference>
<dbReference type="PANTHER" id="PTHR35869">
    <property type="entry name" value="OUTER-MEMBRANE LIPOPROTEIN CARRIER PROTEIN"/>
    <property type="match status" value="1"/>
</dbReference>
<dbReference type="PANTHER" id="PTHR35869:SF1">
    <property type="entry name" value="OUTER-MEMBRANE LIPOPROTEIN CARRIER PROTEIN"/>
    <property type="match status" value="1"/>
</dbReference>
<dbReference type="Pfam" id="PF03548">
    <property type="entry name" value="LolA"/>
    <property type="match status" value="1"/>
</dbReference>
<dbReference type="SUPFAM" id="SSF89392">
    <property type="entry name" value="Prokaryotic lipoproteins and lipoprotein localization factors"/>
    <property type="match status" value="1"/>
</dbReference>
<evidence type="ECO:0000255" key="1">
    <source>
        <dbReference type="HAMAP-Rule" id="MF_00240"/>
    </source>
</evidence>
<organism>
    <name type="scientific">Serratia proteamaculans (strain 568)</name>
    <dbReference type="NCBI Taxonomy" id="399741"/>
    <lineage>
        <taxon>Bacteria</taxon>
        <taxon>Pseudomonadati</taxon>
        <taxon>Pseudomonadota</taxon>
        <taxon>Gammaproteobacteria</taxon>
        <taxon>Enterobacterales</taxon>
        <taxon>Yersiniaceae</taxon>
        <taxon>Serratia</taxon>
    </lineage>
</organism>
<comment type="function">
    <text evidence="1">Participates in the translocation of lipoproteins from the inner membrane to the outer membrane. Only forms a complex with a lipoprotein if the residue after the N-terminal Cys is not an aspartate (The Asp acts as a targeting signal to indicate that the lipoprotein should stay in the inner membrane).</text>
</comment>
<comment type="subunit">
    <text evidence="1">Monomer.</text>
</comment>
<comment type="subcellular location">
    <subcellularLocation>
        <location evidence="1">Periplasm</location>
    </subcellularLocation>
</comment>
<comment type="similarity">
    <text evidence="1">Belongs to the LolA family.</text>
</comment>